<reference key="1">
    <citation type="journal article" date="2005" name="J. Bacteriol.">
        <title>Whole-genome sequencing of Staphylococcus haemolyticus uncovers the extreme plasticity of its genome and the evolution of human-colonizing staphylococcal species.</title>
        <authorList>
            <person name="Takeuchi F."/>
            <person name="Watanabe S."/>
            <person name="Baba T."/>
            <person name="Yuzawa H."/>
            <person name="Ito T."/>
            <person name="Morimoto Y."/>
            <person name="Kuroda M."/>
            <person name="Cui L."/>
            <person name="Takahashi M."/>
            <person name="Ankai A."/>
            <person name="Baba S."/>
            <person name="Fukui S."/>
            <person name="Lee J.C."/>
            <person name="Hiramatsu K."/>
        </authorList>
    </citation>
    <scope>NUCLEOTIDE SEQUENCE [LARGE SCALE GENOMIC DNA]</scope>
    <source>
        <strain>JCSC1435</strain>
    </source>
</reference>
<name>LEUD_STAHJ</name>
<evidence type="ECO:0000255" key="1">
    <source>
        <dbReference type="HAMAP-Rule" id="MF_01031"/>
    </source>
</evidence>
<organism>
    <name type="scientific">Staphylococcus haemolyticus (strain JCSC1435)</name>
    <dbReference type="NCBI Taxonomy" id="279808"/>
    <lineage>
        <taxon>Bacteria</taxon>
        <taxon>Bacillati</taxon>
        <taxon>Bacillota</taxon>
        <taxon>Bacilli</taxon>
        <taxon>Bacillales</taxon>
        <taxon>Staphylococcaceae</taxon>
        <taxon>Staphylococcus</taxon>
    </lineage>
</organism>
<dbReference type="EC" id="4.2.1.33" evidence="1"/>
<dbReference type="EMBL" id="AP006716">
    <property type="protein sequence ID" value="BAE04282.1"/>
    <property type="molecule type" value="Genomic_DNA"/>
</dbReference>
<dbReference type="RefSeq" id="WP_011275281.1">
    <property type="nucleotide sequence ID" value="NC_007168.1"/>
</dbReference>
<dbReference type="SMR" id="Q4L7U3"/>
<dbReference type="GeneID" id="93780364"/>
<dbReference type="KEGG" id="sha:SH0973"/>
<dbReference type="eggNOG" id="COG0066">
    <property type="taxonomic scope" value="Bacteria"/>
</dbReference>
<dbReference type="HOGENOM" id="CLU_081378_0_3_9"/>
<dbReference type="OrthoDB" id="9777465at2"/>
<dbReference type="UniPathway" id="UPA00048">
    <property type="reaction ID" value="UER00071"/>
</dbReference>
<dbReference type="Proteomes" id="UP000000543">
    <property type="component" value="Chromosome"/>
</dbReference>
<dbReference type="GO" id="GO:0009316">
    <property type="term" value="C:3-isopropylmalate dehydratase complex"/>
    <property type="evidence" value="ECO:0007669"/>
    <property type="project" value="InterPro"/>
</dbReference>
<dbReference type="GO" id="GO:0003861">
    <property type="term" value="F:3-isopropylmalate dehydratase activity"/>
    <property type="evidence" value="ECO:0007669"/>
    <property type="project" value="UniProtKB-UniRule"/>
</dbReference>
<dbReference type="GO" id="GO:0009098">
    <property type="term" value="P:L-leucine biosynthetic process"/>
    <property type="evidence" value="ECO:0007669"/>
    <property type="project" value="UniProtKB-UniRule"/>
</dbReference>
<dbReference type="CDD" id="cd01577">
    <property type="entry name" value="IPMI_Swivel"/>
    <property type="match status" value="1"/>
</dbReference>
<dbReference type="FunFam" id="3.20.19.10:FF:000003">
    <property type="entry name" value="3-isopropylmalate dehydratase small subunit"/>
    <property type="match status" value="1"/>
</dbReference>
<dbReference type="Gene3D" id="3.20.19.10">
    <property type="entry name" value="Aconitase, domain 4"/>
    <property type="match status" value="1"/>
</dbReference>
<dbReference type="HAMAP" id="MF_01031">
    <property type="entry name" value="LeuD_type1"/>
    <property type="match status" value="1"/>
</dbReference>
<dbReference type="InterPro" id="IPR004431">
    <property type="entry name" value="3-IsopropMal_deHydase_ssu"/>
</dbReference>
<dbReference type="InterPro" id="IPR015928">
    <property type="entry name" value="Aconitase/3IPM_dehydase_swvl"/>
</dbReference>
<dbReference type="InterPro" id="IPR000573">
    <property type="entry name" value="AconitaseA/IPMdHydase_ssu_swvl"/>
</dbReference>
<dbReference type="InterPro" id="IPR033940">
    <property type="entry name" value="IPMI_Swivel"/>
</dbReference>
<dbReference type="InterPro" id="IPR050075">
    <property type="entry name" value="LeuD"/>
</dbReference>
<dbReference type="NCBIfam" id="TIGR00171">
    <property type="entry name" value="leuD"/>
    <property type="match status" value="1"/>
</dbReference>
<dbReference type="NCBIfam" id="NF002458">
    <property type="entry name" value="PRK01641.1"/>
    <property type="match status" value="1"/>
</dbReference>
<dbReference type="PANTHER" id="PTHR43345:SF5">
    <property type="entry name" value="3-ISOPROPYLMALATE DEHYDRATASE SMALL SUBUNIT"/>
    <property type="match status" value="1"/>
</dbReference>
<dbReference type="PANTHER" id="PTHR43345">
    <property type="entry name" value="3-ISOPROPYLMALATE DEHYDRATASE SMALL SUBUNIT 2-RELATED-RELATED"/>
    <property type="match status" value="1"/>
</dbReference>
<dbReference type="Pfam" id="PF00694">
    <property type="entry name" value="Aconitase_C"/>
    <property type="match status" value="1"/>
</dbReference>
<dbReference type="SUPFAM" id="SSF52016">
    <property type="entry name" value="LeuD/IlvD-like"/>
    <property type="match status" value="1"/>
</dbReference>
<gene>
    <name evidence="1" type="primary">leuD</name>
    <name type="ordered locus">SH0973</name>
</gene>
<proteinExistence type="inferred from homology"/>
<comment type="function">
    <text evidence="1">Catalyzes the isomerization between 2-isopropylmalate and 3-isopropylmalate, via the formation of 2-isopropylmaleate.</text>
</comment>
<comment type="catalytic activity">
    <reaction evidence="1">
        <text>(2R,3S)-3-isopropylmalate = (2S)-2-isopropylmalate</text>
        <dbReference type="Rhea" id="RHEA:32287"/>
        <dbReference type="ChEBI" id="CHEBI:1178"/>
        <dbReference type="ChEBI" id="CHEBI:35121"/>
        <dbReference type="EC" id="4.2.1.33"/>
    </reaction>
</comment>
<comment type="pathway">
    <text evidence="1">Amino-acid biosynthesis; L-leucine biosynthesis; L-leucine from 3-methyl-2-oxobutanoate: step 2/4.</text>
</comment>
<comment type="subunit">
    <text evidence="1">Heterodimer of LeuC and LeuD.</text>
</comment>
<comment type="similarity">
    <text evidence="1">Belongs to the LeuD family. LeuD type 1 subfamily.</text>
</comment>
<sequence>MDIQPITTYTGKVVPLFNDNIDTDQIIPKVHLKRITKSGFGPFAFDEWRYLPDGTNNPDFNPNKPEFSGATILITGDNFGCGSSREHAAWALKDYGFNIIIAGSFSDIFFMNCTKNGMLPITLGENERKYLASQKEITIDLPNQTVSANDKSFNFQIDETWKHKLVNGLDDIAITLEYEDLIEQYENKNKG</sequence>
<feature type="chain" id="PRO_0000141890" description="3-isopropylmalate dehydratase small subunit">
    <location>
        <begin position="1"/>
        <end position="191"/>
    </location>
</feature>
<protein>
    <recommendedName>
        <fullName evidence="1">3-isopropylmalate dehydratase small subunit</fullName>
        <ecNumber evidence="1">4.2.1.33</ecNumber>
    </recommendedName>
    <alternativeName>
        <fullName evidence="1">Alpha-IPM isomerase</fullName>
        <shortName evidence="1">IPMI</shortName>
    </alternativeName>
    <alternativeName>
        <fullName evidence="1">Isopropylmalate isomerase</fullName>
    </alternativeName>
</protein>
<accession>Q4L7U3</accession>
<keyword id="KW-0028">Amino-acid biosynthesis</keyword>
<keyword id="KW-0100">Branched-chain amino acid biosynthesis</keyword>
<keyword id="KW-0432">Leucine biosynthesis</keyword>
<keyword id="KW-0456">Lyase</keyword>